<sequence>MKVQRMAYEMGRYISEEDLAKLIAETSGYPWRWWQQPTLLTPRLWKTLEMLNQIKVHTTKYHNELNRLLKTGKFISDLQLACQAVPRPLTIALFCTLLLWAAEYSFCGEKEETWARCKSAAKVLYSLLQDRV</sequence>
<accession>A9CB84</accession>
<proteinExistence type="predicted"/>
<organismHost>
    <name type="scientific">Pantherophis guttatus</name>
    <name type="common">Corn snake</name>
    <name type="synonym">Elaphe guttata</name>
    <dbReference type="NCBI Taxonomy" id="94885"/>
</organismHost>
<keyword id="KW-1185">Reference proteome</keyword>
<protein>
    <recommendedName>
        <fullName>Protein LH2</fullName>
    </recommendedName>
</protein>
<reference key="1">
    <citation type="journal article" date="2002" name="J. Gen. Virol.">
        <title>Genetic analysis of an adenovirus isolated from corn snake (Elaphe guttata) implies common origin with the members of the proposed new genus Atadenovirus.</title>
        <authorList>
            <person name="Farkas S.L."/>
            <person name="Benko M."/>
            <person name="Elo P.T."/>
            <person name="Ursu K."/>
            <person name="Dan A."/>
            <person name="Ahne W."/>
            <person name="Harrach B."/>
        </authorList>
    </citation>
    <scope>NUCLEOTIDE SEQUENCE [GENOMIC DNA]</scope>
    <source>
        <strain>145/88</strain>
    </source>
</reference>
<name>LH2_ADES1</name>
<feature type="chain" id="PRO_0000425932" description="Protein LH2">
    <location>
        <begin position="1"/>
        <end position="132"/>
    </location>
</feature>
<organism>
    <name type="scientific">Snake adenovirus serotype 1</name>
    <name type="common">SnAdV-1</name>
    <dbReference type="NCBI Taxonomy" id="189830"/>
    <lineage>
        <taxon>Viruses</taxon>
        <taxon>Varidnaviria</taxon>
        <taxon>Bamfordvirae</taxon>
        <taxon>Preplasmiviricota</taxon>
        <taxon>Tectiliviricetes</taxon>
        <taxon>Rowavirales</taxon>
        <taxon>Adenoviridae</taxon>
        <taxon>Atadenovirus</taxon>
        <taxon>Snake atadenovirus A</taxon>
    </lineage>
</organism>
<dbReference type="EMBL" id="DQ106414">
    <property type="protein sequence ID" value="ABA47234.1"/>
    <property type="molecule type" value="Genomic_DNA"/>
</dbReference>
<dbReference type="RefSeq" id="YP_001552244.1">
    <property type="nucleotide sequence ID" value="NC_009989.1"/>
</dbReference>
<dbReference type="SMR" id="A9CB84"/>
<dbReference type="GeneID" id="10973886"/>
<dbReference type="KEGG" id="vg:10973886"/>
<dbReference type="OrthoDB" id="28909at10239"/>
<dbReference type="Proteomes" id="UP000136605">
    <property type="component" value="Genome"/>
</dbReference>